<proteinExistence type="inferred from homology"/>
<comment type="similarity">
    <text evidence="1">Belongs to the universal ribosomal protein uS2 family.</text>
</comment>
<feature type="chain" id="PRO_1000115046" description="Small ribosomal subunit protein uS2">
    <location>
        <begin position="1"/>
        <end position="255"/>
    </location>
</feature>
<feature type="region of interest" description="Disordered" evidence="2">
    <location>
        <begin position="230"/>
        <end position="255"/>
    </location>
</feature>
<dbReference type="EMBL" id="CP001074">
    <property type="protein sequence ID" value="ACE90971.1"/>
    <property type="molecule type" value="Genomic_DNA"/>
</dbReference>
<dbReference type="SMR" id="B3PYP2"/>
<dbReference type="KEGG" id="rec:RHECIAT_CH0002010"/>
<dbReference type="eggNOG" id="COG0052">
    <property type="taxonomic scope" value="Bacteria"/>
</dbReference>
<dbReference type="HOGENOM" id="CLU_040318_2_1_5"/>
<dbReference type="Proteomes" id="UP000008817">
    <property type="component" value="Chromosome"/>
</dbReference>
<dbReference type="GO" id="GO:0022627">
    <property type="term" value="C:cytosolic small ribosomal subunit"/>
    <property type="evidence" value="ECO:0007669"/>
    <property type="project" value="TreeGrafter"/>
</dbReference>
<dbReference type="GO" id="GO:0003735">
    <property type="term" value="F:structural constituent of ribosome"/>
    <property type="evidence" value="ECO:0007669"/>
    <property type="project" value="InterPro"/>
</dbReference>
<dbReference type="GO" id="GO:0006412">
    <property type="term" value="P:translation"/>
    <property type="evidence" value="ECO:0007669"/>
    <property type="project" value="UniProtKB-UniRule"/>
</dbReference>
<dbReference type="CDD" id="cd01425">
    <property type="entry name" value="RPS2"/>
    <property type="match status" value="1"/>
</dbReference>
<dbReference type="FunFam" id="1.10.287.610:FF:000001">
    <property type="entry name" value="30S ribosomal protein S2"/>
    <property type="match status" value="1"/>
</dbReference>
<dbReference type="Gene3D" id="3.40.50.10490">
    <property type="entry name" value="Glucose-6-phosphate isomerase like protein, domain 1"/>
    <property type="match status" value="1"/>
</dbReference>
<dbReference type="Gene3D" id="1.10.287.610">
    <property type="entry name" value="Helix hairpin bin"/>
    <property type="match status" value="1"/>
</dbReference>
<dbReference type="HAMAP" id="MF_00291_B">
    <property type="entry name" value="Ribosomal_uS2_B"/>
    <property type="match status" value="1"/>
</dbReference>
<dbReference type="InterPro" id="IPR001865">
    <property type="entry name" value="Ribosomal_uS2"/>
</dbReference>
<dbReference type="InterPro" id="IPR005706">
    <property type="entry name" value="Ribosomal_uS2_bac/mit/plastid"/>
</dbReference>
<dbReference type="InterPro" id="IPR018130">
    <property type="entry name" value="Ribosomal_uS2_CS"/>
</dbReference>
<dbReference type="InterPro" id="IPR023591">
    <property type="entry name" value="Ribosomal_uS2_flav_dom_sf"/>
</dbReference>
<dbReference type="NCBIfam" id="TIGR01011">
    <property type="entry name" value="rpsB_bact"/>
    <property type="match status" value="1"/>
</dbReference>
<dbReference type="PANTHER" id="PTHR12534">
    <property type="entry name" value="30S RIBOSOMAL PROTEIN S2 PROKARYOTIC AND ORGANELLAR"/>
    <property type="match status" value="1"/>
</dbReference>
<dbReference type="PANTHER" id="PTHR12534:SF0">
    <property type="entry name" value="SMALL RIBOSOMAL SUBUNIT PROTEIN US2M"/>
    <property type="match status" value="1"/>
</dbReference>
<dbReference type="Pfam" id="PF00318">
    <property type="entry name" value="Ribosomal_S2"/>
    <property type="match status" value="1"/>
</dbReference>
<dbReference type="PRINTS" id="PR00395">
    <property type="entry name" value="RIBOSOMALS2"/>
</dbReference>
<dbReference type="SUPFAM" id="SSF52313">
    <property type="entry name" value="Ribosomal protein S2"/>
    <property type="match status" value="1"/>
</dbReference>
<dbReference type="PROSITE" id="PS00962">
    <property type="entry name" value="RIBOSOMAL_S2_1"/>
    <property type="match status" value="1"/>
</dbReference>
<dbReference type="PROSITE" id="PS00963">
    <property type="entry name" value="RIBOSOMAL_S2_2"/>
    <property type="match status" value="1"/>
</dbReference>
<organism>
    <name type="scientific">Rhizobium etli (strain CIAT 652)</name>
    <dbReference type="NCBI Taxonomy" id="491916"/>
    <lineage>
        <taxon>Bacteria</taxon>
        <taxon>Pseudomonadati</taxon>
        <taxon>Pseudomonadota</taxon>
        <taxon>Alphaproteobacteria</taxon>
        <taxon>Hyphomicrobiales</taxon>
        <taxon>Rhizobiaceae</taxon>
        <taxon>Rhizobium/Agrobacterium group</taxon>
        <taxon>Rhizobium</taxon>
    </lineage>
</organism>
<name>RS2_RHIE6</name>
<keyword id="KW-0687">Ribonucleoprotein</keyword>
<keyword id="KW-0689">Ribosomal protein</keyword>
<protein>
    <recommendedName>
        <fullName evidence="1">Small ribosomal subunit protein uS2</fullName>
    </recommendedName>
    <alternativeName>
        <fullName evidence="3">30S ribosomal protein S2</fullName>
    </alternativeName>
</protein>
<evidence type="ECO:0000255" key="1">
    <source>
        <dbReference type="HAMAP-Rule" id="MF_00291"/>
    </source>
</evidence>
<evidence type="ECO:0000256" key="2">
    <source>
        <dbReference type="SAM" id="MobiDB-lite"/>
    </source>
</evidence>
<evidence type="ECO:0000305" key="3"/>
<accession>B3PYP2</accession>
<sequence length="255" mass="28189">MALPDFSMRQLLEAGVHFGHQTHRWNPKMKPYIFGDRNNIHIIDLAQTVPMLSRALQVVSDTVARGGRVLFVGTKRQASEIIADSAKRSAQYYVNSRWLGGMMTNWKTISNSIQRLRKLDEILGGEAQGFTKKERLNLEREREKLDKALGGIRDMGGTPDLMFIIDTNKEKIAIDEAKRLGIPVVAIIDSNCDPDLIDYPIPGNDDASRAIALYCELISRAAIDGIARQQSSSGRDLGASSEVPVEPALEEAAEG</sequence>
<gene>
    <name evidence="1" type="primary">rpsB</name>
    <name type="ordered locus">RHECIAT_CH0002010</name>
</gene>
<reference key="1">
    <citation type="journal article" date="2010" name="Appl. Environ. Microbiol.">
        <title>Conserved symbiotic plasmid DNA sequences in the multireplicon pangenomic structure of Rhizobium etli.</title>
        <authorList>
            <person name="Gonzalez V."/>
            <person name="Acosta J.L."/>
            <person name="Santamaria R.I."/>
            <person name="Bustos P."/>
            <person name="Fernandez J.L."/>
            <person name="Hernandez Gonzalez I.L."/>
            <person name="Diaz R."/>
            <person name="Flores M."/>
            <person name="Palacios R."/>
            <person name="Mora J."/>
            <person name="Davila G."/>
        </authorList>
    </citation>
    <scope>NUCLEOTIDE SEQUENCE [LARGE SCALE GENOMIC DNA]</scope>
    <source>
        <strain>CIAT 652</strain>
    </source>
</reference>